<name>LPXC_ANADF</name>
<proteinExistence type="inferred from homology"/>
<protein>
    <recommendedName>
        <fullName evidence="1">UDP-3-O-acyl-N-acetylglucosamine deacetylase</fullName>
        <shortName evidence="1">UDP-3-O-acyl-GlcNAc deacetylase</shortName>
        <ecNumber evidence="1">3.5.1.108</ecNumber>
    </recommendedName>
    <alternativeName>
        <fullName evidence="1">UDP-3-O-[R-3-hydroxymyristoyl]-N-acetylglucosamine deacetylase</fullName>
    </alternativeName>
</protein>
<sequence>MTYWNQRTVAKRVSCTGVGLHSGKPATLTLAPAPADSGITFVRMDLDVEVPARNDLVVDTMLSTSVALGAARVSTVEHVLAALAGMGIDNCRVEVDGPEIPIVDGSAAPFVCLIQEAGTRQQRAGRRYLVVDQPVEIRDGDKLARLDPADGFVVDFTADFDHPLVTNQSFRVALSDRAFEREVARARTFCFRRDIERMQAAGLAKGGSLDNAIVIDEFSILNPEGLRFPDEFARHKVLDAIGDLALLGMPVLGALTAVKSGHALNQALVRKVLADPGCHRVVRLTSDADVPARRPVALGLPEAI</sequence>
<evidence type="ECO:0000255" key="1">
    <source>
        <dbReference type="HAMAP-Rule" id="MF_00388"/>
    </source>
</evidence>
<keyword id="KW-0378">Hydrolase</keyword>
<keyword id="KW-0441">Lipid A biosynthesis</keyword>
<keyword id="KW-0444">Lipid biosynthesis</keyword>
<keyword id="KW-0443">Lipid metabolism</keyword>
<keyword id="KW-0479">Metal-binding</keyword>
<keyword id="KW-1185">Reference proteome</keyword>
<keyword id="KW-0862">Zinc</keyword>
<gene>
    <name evidence="1" type="primary">lpxC</name>
    <name type="ordered locus">Anae109_1001</name>
</gene>
<comment type="function">
    <text evidence="1">Catalyzes the hydrolysis of UDP-3-O-myristoyl-N-acetylglucosamine to form UDP-3-O-myristoylglucosamine and acetate, the committed step in lipid A biosynthesis.</text>
</comment>
<comment type="catalytic activity">
    <reaction evidence="1">
        <text>a UDP-3-O-[(3R)-3-hydroxyacyl]-N-acetyl-alpha-D-glucosamine + H2O = a UDP-3-O-[(3R)-3-hydroxyacyl]-alpha-D-glucosamine + acetate</text>
        <dbReference type="Rhea" id="RHEA:67816"/>
        <dbReference type="ChEBI" id="CHEBI:15377"/>
        <dbReference type="ChEBI" id="CHEBI:30089"/>
        <dbReference type="ChEBI" id="CHEBI:137740"/>
        <dbReference type="ChEBI" id="CHEBI:173225"/>
        <dbReference type="EC" id="3.5.1.108"/>
    </reaction>
</comment>
<comment type="cofactor">
    <cofactor evidence="1">
        <name>Zn(2+)</name>
        <dbReference type="ChEBI" id="CHEBI:29105"/>
    </cofactor>
</comment>
<comment type="pathway">
    <text evidence="1">Glycolipid biosynthesis; lipid IV(A) biosynthesis; lipid IV(A) from (3R)-3-hydroxytetradecanoyl-[acyl-carrier-protein] and UDP-N-acetyl-alpha-D-glucosamine: step 2/6.</text>
</comment>
<comment type="similarity">
    <text evidence="1">Belongs to the LpxC family.</text>
</comment>
<feature type="chain" id="PRO_1000013188" description="UDP-3-O-acyl-N-acetylglucosamine deacetylase">
    <location>
        <begin position="1"/>
        <end position="304"/>
    </location>
</feature>
<feature type="active site" description="Proton donor" evidence="1">
    <location>
        <position position="262"/>
    </location>
</feature>
<feature type="binding site" evidence="1">
    <location>
        <position position="78"/>
    </location>
    <ligand>
        <name>Zn(2+)</name>
        <dbReference type="ChEBI" id="CHEBI:29105"/>
    </ligand>
</feature>
<feature type="binding site" evidence="1">
    <location>
        <position position="235"/>
    </location>
    <ligand>
        <name>Zn(2+)</name>
        <dbReference type="ChEBI" id="CHEBI:29105"/>
    </ligand>
</feature>
<feature type="binding site" evidence="1">
    <location>
        <position position="239"/>
    </location>
    <ligand>
        <name>Zn(2+)</name>
        <dbReference type="ChEBI" id="CHEBI:29105"/>
    </ligand>
</feature>
<reference key="1">
    <citation type="journal article" date="2015" name="Genome Announc.">
        <title>Complete genome sequence of Anaeromyxobacter sp. Fw109-5, an anaerobic, metal-reducing bacterium isolated from a contaminated subsurface environment.</title>
        <authorList>
            <person name="Hwang C."/>
            <person name="Copeland A."/>
            <person name="Lucas S."/>
            <person name="Lapidus A."/>
            <person name="Barry K."/>
            <person name="Glavina Del Rio T."/>
            <person name="Dalin E."/>
            <person name="Tice H."/>
            <person name="Pitluck S."/>
            <person name="Sims D."/>
            <person name="Brettin T."/>
            <person name="Bruce D.C."/>
            <person name="Detter J.C."/>
            <person name="Han C.S."/>
            <person name="Schmutz J."/>
            <person name="Larimer F.W."/>
            <person name="Land M.L."/>
            <person name="Hauser L.J."/>
            <person name="Kyrpides N."/>
            <person name="Lykidis A."/>
            <person name="Richardson P."/>
            <person name="Belieav A."/>
            <person name="Sanford R.A."/>
            <person name="Loeffler F.E."/>
            <person name="Fields M.W."/>
        </authorList>
    </citation>
    <scope>NUCLEOTIDE SEQUENCE [LARGE SCALE GENOMIC DNA]</scope>
    <source>
        <strain>Fw109-5</strain>
    </source>
</reference>
<dbReference type="EC" id="3.5.1.108" evidence="1"/>
<dbReference type="EMBL" id="CP000769">
    <property type="protein sequence ID" value="ABS25210.1"/>
    <property type="molecule type" value="Genomic_DNA"/>
</dbReference>
<dbReference type="RefSeq" id="WP_011985316.1">
    <property type="nucleotide sequence ID" value="NC_009675.1"/>
</dbReference>
<dbReference type="SMR" id="A7H914"/>
<dbReference type="STRING" id="404589.Anae109_1001"/>
<dbReference type="KEGG" id="afw:Anae109_1001"/>
<dbReference type="eggNOG" id="COG0774">
    <property type="taxonomic scope" value="Bacteria"/>
</dbReference>
<dbReference type="HOGENOM" id="CLU_046528_1_0_7"/>
<dbReference type="OrthoDB" id="9802746at2"/>
<dbReference type="UniPathway" id="UPA00359">
    <property type="reaction ID" value="UER00478"/>
</dbReference>
<dbReference type="Proteomes" id="UP000006382">
    <property type="component" value="Chromosome"/>
</dbReference>
<dbReference type="GO" id="GO:0016020">
    <property type="term" value="C:membrane"/>
    <property type="evidence" value="ECO:0007669"/>
    <property type="project" value="GOC"/>
</dbReference>
<dbReference type="GO" id="GO:0046872">
    <property type="term" value="F:metal ion binding"/>
    <property type="evidence" value="ECO:0007669"/>
    <property type="project" value="UniProtKB-KW"/>
</dbReference>
<dbReference type="GO" id="GO:0103117">
    <property type="term" value="F:UDP-3-O-acyl-N-acetylglucosamine deacetylase activity"/>
    <property type="evidence" value="ECO:0007669"/>
    <property type="project" value="UniProtKB-UniRule"/>
</dbReference>
<dbReference type="GO" id="GO:0009245">
    <property type="term" value="P:lipid A biosynthetic process"/>
    <property type="evidence" value="ECO:0007669"/>
    <property type="project" value="UniProtKB-UniRule"/>
</dbReference>
<dbReference type="Gene3D" id="3.30.230.20">
    <property type="entry name" value="lpxc deacetylase, domain 1"/>
    <property type="match status" value="1"/>
</dbReference>
<dbReference type="Gene3D" id="3.30.1700.10">
    <property type="entry name" value="lpxc deacetylase, domain 2"/>
    <property type="match status" value="1"/>
</dbReference>
<dbReference type="HAMAP" id="MF_00388">
    <property type="entry name" value="LpxC"/>
    <property type="match status" value="1"/>
</dbReference>
<dbReference type="InterPro" id="IPR020568">
    <property type="entry name" value="Ribosomal_Su5_D2-typ_SF"/>
</dbReference>
<dbReference type="InterPro" id="IPR004463">
    <property type="entry name" value="UDP-acyl_GlcNac_deAcase"/>
</dbReference>
<dbReference type="InterPro" id="IPR011334">
    <property type="entry name" value="UDP-acyl_GlcNac_deAcase_C"/>
</dbReference>
<dbReference type="InterPro" id="IPR015870">
    <property type="entry name" value="UDP-acyl_N-AcGlcN_deAcase_N"/>
</dbReference>
<dbReference type="NCBIfam" id="TIGR00325">
    <property type="entry name" value="lpxC"/>
    <property type="match status" value="1"/>
</dbReference>
<dbReference type="PANTHER" id="PTHR33694">
    <property type="entry name" value="UDP-3-O-ACYL-N-ACETYLGLUCOSAMINE DEACETYLASE 1, MITOCHONDRIAL-RELATED"/>
    <property type="match status" value="1"/>
</dbReference>
<dbReference type="PANTHER" id="PTHR33694:SF1">
    <property type="entry name" value="UDP-3-O-ACYL-N-ACETYLGLUCOSAMINE DEACETYLASE 1, MITOCHONDRIAL-RELATED"/>
    <property type="match status" value="1"/>
</dbReference>
<dbReference type="Pfam" id="PF03331">
    <property type="entry name" value="LpxC"/>
    <property type="match status" value="1"/>
</dbReference>
<dbReference type="SUPFAM" id="SSF54211">
    <property type="entry name" value="Ribosomal protein S5 domain 2-like"/>
    <property type="match status" value="2"/>
</dbReference>
<organism>
    <name type="scientific">Anaeromyxobacter sp. (strain Fw109-5)</name>
    <dbReference type="NCBI Taxonomy" id="404589"/>
    <lineage>
        <taxon>Bacteria</taxon>
        <taxon>Pseudomonadati</taxon>
        <taxon>Myxococcota</taxon>
        <taxon>Myxococcia</taxon>
        <taxon>Myxococcales</taxon>
        <taxon>Cystobacterineae</taxon>
        <taxon>Anaeromyxobacteraceae</taxon>
        <taxon>Anaeromyxobacter</taxon>
    </lineage>
</organism>
<accession>A7H914</accession>